<dbReference type="EMBL" id="AF010281">
    <property type="protein sequence ID" value="AAB66325.1"/>
    <property type="molecule type" value="Genomic_DNA"/>
</dbReference>
<dbReference type="RefSeq" id="WP_003567052.1">
    <property type="nucleotide sequence ID" value="NZ_VBWO01000001.1"/>
</dbReference>
<dbReference type="SMR" id="O32846"/>
<dbReference type="GeneID" id="93269833"/>
<dbReference type="GO" id="GO:0005737">
    <property type="term" value="C:cytoplasm"/>
    <property type="evidence" value="ECO:0007669"/>
    <property type="project" value="UniProtKB-SubCell"/>
</dbReference>
<dbReference type="GO" id="GO:0005524">
    <property type="term" value="F:ATP binding"/>
    <property type="evidence" value="ECO:0007669"/>
    <property type="project" value="InterPro"/>
</dbReference>
<dbReference type="GO" id="GO:0046872">
    <property type="term" value="F:metal ion binding"/>
    <property type="evidence" value="ECO:0007669"/>
    <property type="project" value="TreeGrafter"/>
</dbReference>
<dbReference type="GO" id="GO:0044183">
    <property type="term" value="F:protein folding chaperone"/>
    <property type="evidence" value="ECO:0007669"/>
    <property type="project" value="InterPro"/>
</dbReference>
<dbReference type="GO" id="GO:0051087">
    <property type="term" value="F:protein-folding chaperone binding"/>
    <property type="evidence" value="ECO:0007669"/>
    <property type="project" value="TreeGrafter"/>
</dbReference>
<dbReference type="GO" id="GO:0051082">
    <property type="term" value="F:unfolded protein binding"/>
    <property type="evidence" value="ECO:0007669"/>
    <property type="project" value="TreeGrafter"/>
</dbReference>
<dbReference type="GO" id="GO:0051085">
    <property type="term" value="P:chaperone cofactor-dependent protein refolding"/>
    <property type="evidence" value="ECO:0007669"/>
    <property type="project" value="TreeGrafter"/>
</dbReference>
<dbReference type="CDD" id="cd00320">
    <property type="entry name" value="cpn10"/>
    <property type="match status" value="1"/>
</dbReference>
<dbReference type="FunFam" id="2.30.33.40:FF:000001">
    <property type="entry name" value="10 kDa chaperonin"/>
    <property type="match status" value="1"/>
</dbReference>
<dbReference type="Gene3D" id="2.30.33.40">
    <property type="entry name" value="GroES chaperonin"/>
    <property type="match status" value="1"/>
</dbReference>
<dbReference type="HAMAP" id="MF_00580">
    <property type="entry name" value="CH10"/>
    <property type="match status" value="1"/>
</dbReference>
<dbReference type="InterPro" id="IPR020818">
    <property type="entry name" value="Chaperonin_GroES"/>
</dbReference>
<dbReference type="InterPro" id="IPR037124">
    <property type="entry name" value="Chaperonin_GroES_sf"/>
</dbReference>
<dbReference type="InterPro" id="IPR018369">
    <property type="entry name" value="Chaprnonin_Cpn10_CS"/>
</dbReference>
<dbReference type="InterPro" id="IPR011032">
    <property type="entry name" value="GroES-like_sf"/>
</dbReference>
<dbReference type="NCBIfam" id="NF001531">
    <property type="entry name" value="PRK00364.2-2"/>
    <property type="match status" value="1"/>
</dbReference>
<dbReference type="NCBIfam" id="NF001533">
    <property type="entry name" value="PRK00364.2-4"/>
    <property type="match status" value="1"/>
</dbReference>
<dbReference type="NCBIfam" id="NF001534">
    <property type="entry name" value="PRK00364.2-5"/>
    <property type="match status" value="1"/>
</dbReference>
<dbReference type="PANTHER" id="PTHR10772">
    <property type="entry name" value="10 KDA HEAT SHOCK PROTEIN"/>
    <property type="match status" value="1"/>
</dbReference>
<dbReference type="PANTHER" id="PTHR10772:SF58">
    <property type="entry name" value="CO-CHAPERONIN GROES"/>
    <property type="match status" value="1"/>
</dbReference>
<dbReference type="Pfam" id="PF00166">
    <property type="entry name" value="Cpn10"/>
    <property type="match status" value="1"/>
</dbReference>
<dbReference type="PRINTS" id="PR00297">
    <property type="entry name" value="CHAPERONIN10"/>
</dbReference>
<dbReference type="SMART" id="SM00883">
    <property type="entry name" value="Cpn10"/>
    <property type="match status" value="1"/>
</dbReference>
<dbReference type="SUPFAM" id="SSF50129">
    <property type="entry name" value="GroES-like"/>
    <property type="match status" value="1"/>
</dbReference>
<dbReference type="PROSITE" id="PS00681">
    <property type="entry name" value="CHAPERONINS_CPN10"/>
    <property type="match status" value="1"/>
</dbReference>
<feature type="chain" id="PRO_0000174773" description="Co-chaperonin GroES">
    <location>
        <begin position="1"/>
        <end position="93"/>
    </location>
</feature>
<name>CH10_LACZE</name>
<proteinExistence type="inferred from homology"/>
<sequence>MLKPLGDRVIVEVVEEEEQTVGGIVLANNAKQKPQTGKVVAVGEGALTPEGKRLPMAVKVGDTVLYDKYAGSEVKYEGQDYLVLHEKDIMAIA</sequence>
<comment type="function">
    <text evidence="1">Together with the chaperonin GroEL, plays an essential role in assisting protein folding. The GroEL-GroES system forms a nano-cage that allows encapsulation of the non-native substrate proteins and provides a physical environment optimized to promote and accelerate protein folding. GroES binds to the apical surface of the GroEL ring, thereby capping the opening of the GroEL channel.</text>
</comment>
<comment type="subunit">
    <text evidence="1">Heptamer of 7 subunits arranged in a ring. Interacts with the chaperonin GroEL.</text>
</comment>
<comment type="subcellular location">
    <subcellularLocation>
        <location evidence="1">Cytoplasm</location>
    </subcellularLocation>
</comment>
<comment type="similarity">
    <text evidence="1">Belongs to the GroES chaperonin family.</text>
</comment>
<gene>
    <name evidence="1" type="primary">groES</name>
    <name evidence="1" type="synonym">groS</name>
</gene>
<organism>
    <name type="scientific">Lacticaseibacillus zeae</name>
    <name type="common">Lactobacillus zeae</name>
    <dbReference type="NCBI Taxonomy" id="57037"/>
    <lineage>
        <taxon>Bacteria</taxon>
        <taxon>Bacillati</taxon>
        <taxon>Bacillota</taxon>
        <taxon>Bacilli</taxon>
        <taxon>Lactobacillales</taxon>
        <taxon>Lactobacillaceae</taxon>
        <taxon>Lacticaseibacillus</taxon>
    </lineage>
</organism>
<reference key="1">
    <citation type="submission" date="1997-06" db="EMBL/GenBank/DDBJ databases">
        <title>Molecular characterization of the heat-shock regulated groESL operon of Lactobacillus zeae.</title>
        <authorList>
            <person name="Murphy C.M."/>
            <person name="Chassy B.M."/>
        </authorList>
    </citation>
    <scope>NUCLEOTIDE SEQUENCE [GENOMIC DNA]</scope>
    <source>
        <strain>102S</strain>
    </source>
</reference>
<keyword id="KW-0143">Chaperone</keyword>
<keyword id="KW-0963">Cytoplasm</keyword>
<protein>
    <recommendedName>
        <fullName evidence="1">Co-chaperonin GroES</fullName>
    </recommendedName>
    <alternativeName>
        <fullName evidence="1">10 kDa chaperonin</fullName>
    </alternativeName>
    <alternativeName>
        <fullName evidence="1">Chaperonin-10</fullName>
        <shortName evidence="1">Cpn10</shortName>
    </alternativeName>
</protein>
<evidence type="ECO:0000255" key="1">
    <source>
        <dbReference type="HAMAP-Rule" id="MF_00580"/>
    </source>
</evidence>
<accession>O32846</accession>